<protein>
    <recommendedName>
        <fullName evidence="1">Large ribosomal subunit protein bL9</fullName>
    </recommendedName>
    <alternativeName>
        <fullName evidence="2">50S ribosomal protein L9</fullName>
    </alternativeName>
</protein>
<dbReference type="EMBL" id="AL646052">
    <property type="protein sequence ID" value="CAD15012.1"/>
    <property type="molecule type" value="Genomic_DNA"/>
</dbReference>
<dbReference type="RefSeq" id="WP_011001259.1">
    <property type="nucleotide sequence ID" value="NC_003295.1"/>
</dbReference>
<dbReference type="SMR" id="Q8XZT5"/>
<dbReference type="STRING" id="267608.RSc1310"/>
<dbReference type="EnsemblBacteria" id="CAD15012">
    <property type="protein sequence ID" value="CAD15012"/>
    <property type="gene ID" value="RSc1310"/>
</dbReference>
<dbReference type="KEGG" id="rso:RSc1310"/>
<dbReference type="eggNOG" id="COG0359">
    <property type="taxonomic scope" value="Bacteria"/>
</dbReference>
<dbReference type="HOGENOM" id="CLU_078938_4_1_4"/>
<dbReference type="Proteomes" id="UP000001436">
    <property type="component" value="Chromosome"/>
</dbReference>
<dbReference type="GO" id="GO:1990904">
    <property type="term" value="C:ribonucleoprotein complex"/>
    <property type="evidence" value="ECO:0007669"/>
    <property type="project" value="UniProtKB-KW"/>
</dbReference>
<dbReference type="GO" id="GO:0005840">
    <property type="term" value="C:ribosome"/>
    <property type="evidence" value="ECO:0007669"/>
    <property type="project" value="UniProtKB-KW"/>
</dbReference>
<dbReference type="GO" id="GO:0019843">
    <property type="term" value="F:rRNA binding"/>
    <property type="evidence" value="ECO:0007669"/>
    <property type="project" value="UniProtKB-UniRule"/>
</dbReference>
<dbReference type="GO" id="GO:0003735">
    <property type="term" value="F:structural constituent of ribosome"/>
    <property type="evidence" value="ECO:0007669"/>
    <property type="project" value="InterPro"/>
</dbReference>
<dbReference type="GO" id="GO:0006412">
    <property type="term" value="P:translation"/>
    <property type="evidence" value="ECO:0007669"/>
    <property type="project" value="UniProtKB-UniRule"/>
</dbReference>
<dbReference type="Gene3D" id="3.10.430.100">
    <property type="entry name" value="Ribosomal protein L9, C-terminal domain"/>
    <property type="match status" value="1"/>
</dbReference>
<dbReference type="Gene3D" id="3.40.5.10">
    <property type="entry name" value="Ribosomal protein L9, N-terminal domain"/>
    <property type="match status" value="1"/>
</dbReference>
<dbReference type="HAMAP" id="MF_00503">
    <property type="entry name" value="Ribosomal_bL9"/>
    <property type="match status" value="1"/>
</dbReference>
<dbReference type="InterPro" id="IPR000244">
    <property type="entry name" value="Ribosomal_bL9"/>
</dbReference>
<dbReference type="InterPro" id="IPR009027">
    <property type="entry name" value="Ribosomal_bL9/RNase_H1_N"/>
</dbReference>
<dbReference type="InterPro" id="IPR020594">
    <property type="entry name" value="Ribosomal_bL9_bac/chp"/>
</dbReference>
<dbReference type="InterPro" id="IPR020069">
    <property type="entry name" value="Ribosomal_bL9_C"/>
</dbReference>
<dbReference type="InterPro" id="IPR036791">
    <property type="entry name" value="Ribosomal_bL9_C_sf"/>
</dbReference>
<dbReference type="InterPro" id="IPR020070">
    <property type="entry name" value="Ribosomal_bL9_N"/>
</dbReference>
<dbReference type="InterPro" id="IPR036935">
    <property type="entry name" value="Ribosomal_bL9_N_sf"/>
</dbReference>
<dbReference type="NCBIfam" id="TIGR00158">
    <property type="entry name" value="L9"/>
    <property type="match status" value="1"/>
</dbReference>
<dbReference type="PANTHER" id="PTHR21368">
    <property type="entry name" value="50S RIBOSOMAL PROTEIN L9"/>
    <property type="match status" value="1"/>
</dbReference>
<dbReference type="Pfam" id="PF03948">
    <property type="entry name" value="Ribosomal_L9_C"/>
    <property type="match status" value="1"/>
</dbReference>
<dbReference type="Pfam" id="PF01281">
    <property type="entry name" value="Ribosomal_L9_N"/>
    <property type="match status" value="1"/>
</dbReference>
<dbReference type="SUPFAM" id="SSF55658">
    <property type="entry name" value="L9 N-domain-like"/>
    <property type="match status" value="1"/>
</dbReference>
<dbReference type="SUPFAM" id="SSF55653">
    <property type="entry name" value="Ribosomal protein L9 C-domain"/>
    <property type="match status" value="1"/>
</dbReference>
<dbReference type="PROSITE" id="PS00651">
    <property type="entry name" value="RIBOSOMAL_L9"/>
    <property type="match status" value="1"/>
</dbReference>
<feature type="chain" id="PRO_0000176664" description="Large ribosomal subunit protein bL9">
    <location>
        <begin position="1"/>
        <end position="150"/>
    </location>
</feature>
<reference key="1">
    <citation type="journal article" date="2002" name="Nature">
        <title>Genome sequence of the plant pathogen Ralstonia solanacearum.</title>
        <authorList>
            <person name="Salanoubat M."/>
            <person name="Genin S."/>
            <person name="Artiguenave F."/>
            <person name="Gouzy J."/>
            <person name="Mangenot S."/>
            <person name="Arlat M."/>
            <person name="Billault A."/>
            <person name="Brottier P."/>
            <person name="Camus J.-C."/>
            <person name="Cattolico L."/>
            <person name="Chandler M."/>
            <person name="Choisne N."/>
            <person name="Claudel-Renard C."/>
            <person name="Cunnac S."/>
            <person name="Demange N."/>
            <person name="Gaspin C."/>
            <person name="Lavie M."/>
            <person name="Moisan A."/>
            <person name="Robert C."/>
            <person name="Saurin W."/>
            <person name="Schiex T."/>
            <person name="Siguier P."/>
            <person name="Thebault P."/>
            <person name="Whalen M."/>
            <person name="Wincker P."/>
            <person name="Levy M."/>
            <person name="Weissenbach J."/>
            <person name="Boucher C.A."/>
        </authorList>
    </citation>
    <scope>NUCLEOTIDE SEQUENCE [LARGE SCALE GENOMIC DNA]</scope>
    <source>
        <strain>ATCC BAA-1114 / GMI1000</strain>
    </source>
</reference>
<organism>
    <name type="scientific">Ralstonia nicotianae (strain ATCC BAA-1114 / GMI1000)</name>
    <name type="common">Ralstonia solanacearum</name>
    <dbReference type="NCBI Taxonomy" id="267608"/>
    <lineage>
        <taxon>Bacteria</taxon>
        <taxon>Pseudomonadati</taxon>
        <taxon>Pseudomonadota</taxon>
        <taxon>Betaproteobacteria</taxon>
        <taxon>Burkholderiales</taxon>
        <taxon>Burkholderiaceae</taxon>
        <taxon>Ralstonia</taxon>
        <taxon>Ralstonia solanacearum species complex</taxon>
    </lineage>
</organism>
<gene>
    <name evidence="1" type="primary">rplI</name>
    <name type="ordered locus">RSc1310</name>
    <name type="ORF">RS02832</name>
</gene>
<comment type="function">
    <text evidence="1">Binds to the 23S rRNA.</text>
</comment>
<comment type="similarity">
    <text evidence="1">Belongs to the bacterial ribosomal protein bL9 family.</text>
</comment>
<evidence type="ECO:0000255" key="1">
    <source>
        <dbReference type="HAMAP-Rule" id="MF_00503"/>
    </source>
</evidence>
<evidence type="ECO:0000305" key="2"/>
<proteinExistence type="inferred from homology"/>
<sequence>MQIILLEKVVNLGNLGDVVRVKDGYARNFLIPNKQARRATASAIQEFEARRAELEKLAAERLAAAQAEGEKLNGLTLQLSQKAGVDGRLFGSVTNHDIAAALTAQGFKVEKAQVRMPNGPLKTVGDHPVAVSLHTDVSVDVTVSVLGETV</sequence>
<name>RL9_RALN1</name>
<accession>Q8XZT5</accession>
<keyword id="KW-1185">Reference proteome</keyword>
<keyword id="KW-0687">Ribonucleoprotein</keyword>
<keyword id="KW-0689">Ribosomal protein</keyword>
<keyword id="KW-0694">RNA-binding</keyword>
<keyword id="KW-0699">rRNA-binding</keyword>